<evidence type="ECO:0000255" key="1">
    <source>
        <dbReference type="HAMAP-Rule" id="MF_00136"/>
    </source>
</evidence>
<keyword id="KW-0067">ATP-binding</keyword>
<keyword id="KW-0460">Magnesium</keyword>
<keyword id="KW-0547">Nucleotide-binding</keyword>
<keyword id="KW-0554">One-carbon metabolism</keyword>
<keyword id="KW-0808">Transferase</keyword>
<protein>
    <recommendedName>
        <fullName evidence="1">S-adenosylmethionine synthase</fullName>
        <shortName evidence="1">AdoMet synthase</shortName>
        <ecNumber evidence="1">2.5.1.6</ecNumber>
    </recommendedName>
    <alternativeName>
        <fullName evidence="1">Methionine adenosyltransferase</fullName>
    </alternativeName>
</protein>
<accession>B6YUL1</accession>
<sequence>MPENVRNIVVEELVRTPVEMQKVELVERKGIGHPDSIADGIAEAVSRALSREYIKRYGIILHHNTDQVEVVGGKAYPRFGGGEVIKPIYILLSGRAVEIVDREMFPVHEVAIKAAREYLKNAVRHLDLDHHVIIDSRIGQGSVDLVGVFNKAKENPIPLANDTSFGVGYAPLSETERIVLETEKLLNSEEFKKEWPAVGEDIKVMGLRKGDEIDITIAAAIVDSEVQNLDDYFAVKEAIYEAAKDVAEAHTERKVNIYVNTADDPEKGIYYITVTGTSAEAGDDGSVGRGNRVNGLITPNRHMSMEAAAGKNPVSHVGKIYNLLSMLIANDIAEQVEGVEEVYVRILSQIGKPIDQPLVASVQVIPKKGYSIDTIQKPAYEIANAWLDDITKIQKMILEDKLNVF</sequence>
<name>METK_THEON</name>
<comment type="function">
    <text evidence="1">Catalyzes the formation of S-adenosylmethionine from methionine and ATP.</text>
</comment>
<comment type="catalytic activity">
    <reaction evidence="1">
        <text>L-methionine + ATP + H2O = S-adenosyl-L-methionine + phosphate + diphosphate</text>
        <dbReference type="Rhea" id="RHEA:21080"/>
        <dbReference type="ChEBI" id="CHEBI:15377"/>
        <dbReference type="ChEBI" id="CHEBI:30616"/>
        <dbReference type="ChEBI" id="CHEBI:33019"/>
        <dbReference type="ChEBI" id="CHEBI:43474"/>
        <dbReference type="ChEBI" id="CHEBI:57844"/>
        <dbReference type="ChEBI" id="CHEBI:59789"/>
        <dbReference type="EC" id="2.5.1.6"/>
    </reaction>
</comment>
<comment type="cofactor">
    <cofactor evidence="1">
        <name>Mg(2+)</name>
        <dbReference type="ChEBI" id="CHEBI:18420"/>
    </cofactor>
</comment>
<comment type="pathway">
    <text evidence="1">Amino-acid biosynthesis; S-adenosyl-L-methionine biosynthesis; S-adenosyl-L-methionine from L-methionine: step 1/1.</text>
</comment>
<comment type="similarity">
    <text evidence="1">Belongs to the AdoMet synthase 2 family.</text>
</comment>
<proteinExistence type="inferred from homology"/>
<organism>
    <name type="scientific">Thermococcus onnurineus (strain NA1)</name>
    <dbReference type="NCBI Taxonomy" id="523850"/>
    <lineage>
        <taxon>Archaea</taxon>
        <taxon>Methanobacteriati</taxon>
        <taxon>Methanobacteriota</taxon>
        <taxon>Thermococci</taxon>
        <taxon>Thermococcales</taxon>
        <taxon>Thermococcaceae</taxon>
        <taxon>Thermococcus</taxon>
    </lineage>
</organism>
<dbReference type="EC" id="2.5.1.6" evidence="1"/>
<dbReference type="EMBL" id="CP000855">
    <property type="protein sequence ID" value="ACJ16047.1"/>
    <property type="molecule type" value="Genomic_DNA"/>
</dbReference>
<dbReference type="RefSeq" id="WP_012571519.1">
    <property type="nucleotide sequence ID" value="NC_011529.1"/>
</dbReference>
<dbReference type="SMR" id="B6YUL1"/>
<dbReference type="STRING" id="523850.TON_0560"/>
<dbReference type="GeneID" id="7016858"/>
<dbReference type="KEGG" id="ton:TON_0560"/>
<dbReference type="PATRIC" id="fig|523850.10.peg.559"/>
<dbReference type="eggNOG" id="arCOG01678">
    <property type="taxonomic scope" value="Archaea"/>
</dbReference>
<dbReference type="HOGENOM" id="CLU_057642_0_0_2"/>
<dbReference type="OrthoDB" id="204488at2157"/>
<dbReference type="UniPathway" id="UPA00315">
    <property type="reaction ID" value="UER00080"/>
</dbReference>
<dbReference type="Proteomes" id="UP000002727">
    <property type="component" value="Chromosome"/>
</dbReference>
<dbReference type="GO" id="GO:0005524">
    <property type="term" value="F:ATP binding"/>
    <property type="evidence" value="ECO:0007669"/>
    <property type="project" value="UniProtKB-UniRule"/>
</dbReference>
<dbReference type="GO" id="GO:0000287">
    <property type="term" value="F:magnesium ion binding"/>
    <property type="evidence" value="ECO:0007669"/>
    <property type="project" value="UniProtKB-UniRule"/>
</dbReference>
<dbReference type="GO" id="GO:0004478">
    <property type="term" value="F:methionine adenosyltransferase activity"/>
    <property type="evidence" value="ECO:0007669"/>
    <property type="project" value="UniProtKB-UniRule"/>
</dbReference>
<dbReference type="GO" id="GO:0006730">
    <property type="term" value="P:one-carbon metabolic process"/>
    <property type="evidence" value="ECO:0007669"/>
    <property type="project" value="UniProtKB-KW"/>
</dbReference>
<dbReference type="GO" id="GO:0006556">
    <property type="term" value="P:S-adenosylmethionine biosynthetic process"/>
    <property type="evidence" value="ECO:0007669"/>
    <property type="project" value="UniProtKB-UniRule"/>
</dbReference>
<dbReference type="Gene3D" id="3.30.300.10">
    <property type="match status" value="1"/>
</dbReference>
<dbReference type="Gene3D" id="3.30.300.280">
    <property type="entry name" value="S-adenosylmethionine synthetase, C-terminal domain"/>
    <property type="match status" value="2"/>
</dbReference>
<dbReference type="HAMAP" id="MF_00136">
    <property type="entry name" value="S_AdoMet_synth2"/>
    <property type="match status" value="1"/>
</dbReference>
<dbReference type="InterPro" id="IPR027790">
    <property type="entry name" value="AdoMet_synthase_2_family"/>
</dbReference>
<dbReference type="InterPro" id="IPR042544">
    <property type="entry name" value="AdoMet_synthase_3"/>
</dbReference>
<dbReference type="InterPro" id="IPR002795">
    <property type="entry name" value="S-AdoMet_synthetase_arc"/>
</dbReference>
<dbReference type="NCBIfam" id="NF003364">
    <property type="entry name" value="PRK04439.1-3"/>
    <property type="match status" value="1"/>
</dbReference>
<dbReference type="NCBIfam" id="NF003366">
    <property type="entry name" value="PRK04439.1-5"/>
    <property type="match status" value="1"/>
</dbReference>
<dbReference type="PANTHER" id="PTHR36697">
    <property type="entry name" value="S-ADENOSYLMETHIONINE SYNTHASE"/>
    <property type="match status" value="1"/>
</dbReference>
<dbReference type="PANTHER" id="PTHR36697:SF1">
    <property type="entry name" value="S-ADENOSYLMETHIONINE SYNTHASE"/>
    <property type="match status" value="1"/>
</dbReference>
<dbReference type="Pfam" id="PF01941">
    <property type="entry name" value="AdoMet_Synthase"/>
    <property type="match status" value="1"/>
</dbReference>
<feature type="chain" id="PRO_1000196742" description="S-adenosylmethionine synthase">
    <location>
        <begin position="1"/>
        <end position="405"/>
    </location>
</feature>
<feature type="binding site" evidence="1">
    <location>
        <begin position="139"/>
        <end position="144"/>
    </location>
    <ligand>
        <name>ATP</name>
        <dbReference type="ChEBI" id="CHEBI:30616"/>
    </ligand>
</feature>
<gene>
    <name evidence="1" type="primary">mat</name>
    <name type="ordered locus">TON_0560</name>
</gene>
<reference key="1">
    <citation type="journal article" date="2008" name="J. Bacteriol.">
        <title>The complete genome sequence of Thermococcus onnurineus NA1 reveals a mixed heterotrophic and carboxydotrophic metabolism.</title>
        <authorList>
            <person name="Lee H.S."/>
            <person name="Kang S.G."/>
            <person name="Bae S.S."/>
            <person name="Lim J.K."/>
            <person name="Cho Y."/>
            <person name="Kim Y.J."/>
            <person name="Jeon J.H."/>
            <person name="Cha S.-S."/>
            <person name="Kwon K.K."/>
            <person name="Kim H.-T."/>
            <person name="Park C.-J."/>
            <person name="Lee H.-W."/>
            <person name="Kim S.I."/>
            <person name="Chun J."/>
            <person name="Colwell R.R."/>
            <person name="Kim S.-J."/>
            <person name="Lee J.-H."/>
        </authorList>
    </citation>
    <scope>NUCLEOTIDE SEQUENCE [LARGE SCALE GENOMIC DNA]</scope>
    <source>
        <strain>NA1</strain>
    </source>
</reference>